<comment type="function">
    <text evidence="1">Binds 16S rRNA, required for the assembly of 30S particles and may also be responsible for determining the conformation of the 16S rRNA at the A site.</text>
</comment>
<comment type="cofactor">
    <cofactor evidence="1">
        <name>Zn(2+)</name>
        <dbReference type="ChEBI" id="CHEBI:29105"/>
    </cofactor>
    <text evidence="1">Binds 1 zinc ion per subunit.</text>
</comment>
<comment type="subunit">
    <text evidence="1">Part of the 30S ribosomal subunit. Contacts proteins S3 and S10.</text>
</comment>
<comment type="similarity">
    <text evidence="1">Belongs to the universal ribosomal protein uS14 family. Zinc-binding uS14 subfamily.</text>
</comment>
<reference key="1">
    <citation type="journal article" date="2005" name="J. Bacteriol.">
        <title>Whole-genome sequencing of Staphylococcus haemolyticus uncovers the extreme plasticity of its genome and the evolution of human-colonizing staphylococcal species.</title>
        <authorList>
            <person name="Takeuchi F."/>
            <person name="Watanabe S."/>
            <person name="Baba T."/>
            <person name="Yuzawa H."/>
            <person name="Ito T."/>
            <person name="Morimoto Y."/>
            <person name="Kuroda M."/>
            <person name="Cui L."/>
            <person name="Takahashi M."/>
            <person name="Ankai A."/>
            <person name="Baba S."/>
            <person name="Fukui S."/>
            <person name="Lee J.C."/>
            <person name="Hiramatsu K."/>
        </authorList>
    </citation>
    <scope>NUCLEOTIDE SEQUENCE [LARGE SCALE GENOMIC DNA]</scope>
    <source>
        <strain>JCSC1435</strain>
    </source>
</reference>
<name>RS14Z_STAHJ</name>
<feature type="chain" id="PRO_0000269139" description="Small ribosomal subunit protein uS14B">
    <location>
        <begin position="1"/>
        <end position="61"/>
    </location>
</feature>
<feature type="binding site" evidence="1">
    <location>
        <position position="24"/>
    </location>
    <ligand>
        <name>Zn(2+)</name>
        <dbReference type="ChEBI" id="CHEBI:29105"/>
    </ligand>
</feature>
<feature type="binding site" evidence="1">
    <location>
        <position position="27"/>
    </location>
    <ligand>
        <name>Zn(2+)</name>
        <dbReference type="ChEBI" id="CHEBI:29105"/>
    </ligand>
</feature>
<feature type="binding site" evidence="1">
    <location>
        <position position="40"/>
    </location>
    <ligand>
        <name>Zn(2+)</name>
        <dbReference type="ChEBI" id="CHEBI:29105"/>
    </ligand>
</feature>
<feature type="binding site" evidence="1">
    <location>
        <position position="43"/>
    </location>
    <ligand>
        <name>Zn(2+)</name>
        <dbReference type="ChEBI" id="CHEBI:29105"/>
    </ligand>
</feature>
<organism>
    <name type="scientific">Staphylococcus haemolyticus (strain JCSC1435)</name>
    <dbReference type="NCBI Taxonomy" id="279808"/>
    <lineage>
        <taxon>Bacteria</taxon>
        <taxon>Bacillati</taxon>
        <taxon>Bacillota</taxon>
        <taxon>Bacilli</taxon>
        <taxon>Bacillales</taxon>
        <taxon>Staphylococcaceae</taxon>
        <taxon>Staphylococcus</taxon>
    </lineage>
</organism>
<sequence length="61" mass="7300">MAKTSMVAKQQKKQKYAVREYTRCERCGRPHSVYRKFKLCRICFRELAYKGQIPGVRKASW</sequence>
<gene>
    <name evidence="1" type="primary">rpsZ</name>
    <name evidence="1" type="synonym">rpsN1</name>
    <name type="ordered locus">SH0815</name>
</gene>
<keyword id="KW-0479">Metal-binding</keyword>
<keyword id="KW-0687">Ribonucleoprotein</keyword>
<keyword id="KW-0689">Ribosomal protein</keyword>
<keyword id="KW-0694">RNA-binding</keyword>
<keyword id="KW-0699">rRNA-binding</keyword>
<keyword id="KW-0862">Zinc</keyword>
<dbReference type="EMBL" id="AP006716">
    <property type="protein sequence ID" value="BAE04124.1"/>
    <property type="molecule type" value="Genomic_DNA"/>
</dbReference>
<dbReference type="RefSeq" id="WP_001140799.1">
    <property type="nucleotide sequence ID" value="NC_007168.1"/>
</dbReference>
<dbReference type="SMR" id="Q4L8A1"/>
<dbReference type="KEGG" id="sha:SH0815"/>
<dbReference type="eggNOG" id="COG0199">
    <property type="taxonomic scope" value="Bacteria"/>
</dbReference>
<dbReference type="HOGENOM" id="CLU_139869_3_0_9"/>
<dbReference type="OrthoDB" id="9810484at2"/>
<dbReference type="Proteomes" id="UP000000543">
    <property type="component" value="Chromosome"/>
</dbReference>
<dbReference type="GO" id="GO:0015935">
    <property type="term" value="C:small ribosomal subunit"/>
    <property type="evidence" value="ECO:0007669"/>
    <property type="project" value="TreeGrafter"/>
</dbReference>
<dbReference type="GO" id="GO:0019843">
    <property type="term" value="F:rRNA binding"/>
    <property type="evidence" value="ECO:0007669"/>
    <property type="project" value="UniProtKB-UniRule"/>
</dbReference>
<dbReference type="GO" id="GO:0003735">
    <property type="term" value="F:structural constituent of ribosome"/>
    <property type="evidence" value="ECO:0007669"/>
    <property type="project" value="InterPro"/>
</dbReference>
<dbReference type="GO" id="GO:0008270">
    <property type="term" value="F:zinc ion binding"/>
    <property type="evidence" value="ECO:0007669"/>
    <property type="project" value="UniProtKB-UniRule"/>
</dbReference>
<dbReference type="GO" id="GO:0006412">
    <property type="term" value="P:translation"/>
    <property type="evidence" value="ECO:0007669"/>
    <property type="project" value="UniProtKB-UniRule"/>
</dbReference>
<dbReference type="FunFam" id="4.10.830.10:FF:000001">
    <property type="entry name" value="30S ribosomal protein S14 type Z"/>
    <property type="match status" value="1"/>
</dbReference>
<dbReference type="Gene3D" id="4.10.830.10">
    <property type="entry name" value="30s Ribosomal Protein S14, Chain N"/>
    <property type="match status" value="1"/>
</dbReference>
<dbReference type="HAMAP" id="MF_01364_B">
    <property type="entry name" value="Ribosomal_uS14_2_B"/>
    <property type="match status" value="1"/>
</dbReference>
<dbReference type="InterPro" id="IPR001209">
    <property type="entry name" value="Ribosomal_uS14"/>
</dbReference>
<dbReference type="InterPro" id="IPR023053">
    <property type="entry name" value="Ribosomal_uS14_bact"/>
</dbReference>
<dbReference type="InterPro" id="IPR018271">
    <property type="entry name" value="Ribosomal_uS14_CS"/>
</dbReference>
<dbReference type="InterPro" id="IPR043140">
    <property type="entry name" value="Ribosomal_uS14_sf"/>
</dbReference>
<dbReference type="NCBIfam" id="NF005974">
    <property type="entry name" value="PRK08061.1"/>
    <property type="match status" value="1"/>
</dbReference>
<dbReference type="PANTHER" id="PTHR19836">
    <property type="entry name" value="30S RIBOSOMAL PROTEIN S14"/>
    <property type="match status" value="1"/>
</dbReference>
<dbReference type="PANTHER" id="PTHR19836:SF26">
    <property type="entry name" value="SMALL RIBOSOMAL SUBUNIT PROTEIN US14B"/>
    <property type="match status" value="1"/>
</dbReference>
<dbReference type="Pfam" id="PF00253">
    <property type="entry name" value="Ribosomal_S14"/>
    <property type="match status" value="1"/>
</dbReference>
<dbReference type="SUPFAM" id="SSF57716">
    <property type="entry name" value="Glucocorticoid receptor-like (DNA-binding domain)"/>
    <property type="match status" value="1"/>
</dbReference>
<dbReference type="PROSITE" id="PS00527">
    <property type="entry name" value="RIBOSOMAL_S14"/>
    <property type="match status" value="1"/>
</dbReference>
<accession>Q4L8A1</accession>
<protein>
    <recommendedName>
        <fullName evidence="1">Small ribosomal subunit protein uS14B</fullName>
    </recommendedName>
    <alternativeName>
        <fullName evidence="2">30S ribosomal protein S14 type Z</fullName>
    </alternativeName>
</protein>
<evidence type="ECO:0000255" key="1">
    <source>
        <dbReference type="HAMAP-Rule" id="MF_01364"/>
    </source>
</evidence>
<evidence type="ECO:0000305" key="2"/>
<proteinExistence type="inferred from homology"/>